<feature type="chain" id="PRO_1000199534" description="Threonine--tRNA ligase">
    <location>
        <begin position="1"/>
        <end position="642"/>
    </location>
</feature>
<feature type="domain" description="TGS" evidence="2">
    <location>
        <begin position="1"/>
        <end position="61"/>
    </location>
</feature>
<feature type="region of interest" description="Catalytic" evidence="1">
    <location>
        <begin position="243"/>
        <end position="534"/>
    </location>
</feature>
<feature type="binding site" evidence="1">
    <location>
        <position position="334"/>
    </location>
    <ligand>
        <name>Zn(2+)</name>
        <dbReference type="ChEBI" id="CHEBI:29105"/>
    </ligand>
</feature>
<feature type="binding site" evidence="1">
    <location>
        <position position="385"/>
    </location>
    <ligand>
        <name>Zn(2+)</name>
        <dbReference type="ChEBI" id="CHEBI:29105"/>
    </ligand>
</feature>
<feature type="binding site" evidence="1">
    <location>
        <position position="511"/>
    </location>
    <ligand>
        <name>Zn(2+)</name>
        <dbReference type="ChEBI" id="CHEBI:29105"/>
    </ligand>
</feature>
<comment type="function">
    <text evidence="1">Catalyzes the attachment of threonine to tRNA(Thr) in a two-step reaction: L-threonine is first activated by ATP to form Thr-AMP and then transferred to the acceptor end of tRNA(Thr). Also edits incorrectly charged L-seryl-tRNA(Thr).</text>
</comment>
<comment type="catalytic activity">
    <reaction evidence="1">
        <text>tRNA(Thr) + L-threonine + ATP = L-threonyl-tRNA(Thr) + AMP + diphosphate + H(+)</text>
        <dbReference type="Rhea" id="RHEA:24624"/>
        <dbReference type="Rhea" id="RHEA-COMP:9670"/>
        <dbReference type="Rhea" id="RHEA-COMP:9704"/>
        <dbReference type="ChEBI" id="CHEBI:15378"/>
        <dbReference type="ChEBI" id="CHEBI:30616"/>
        <dbReference type="ChEBI" id="CHEBI:33019"/>
        <dbReference type="ChEBI" id="CHEBI:57926"/>
        <dbReference type="ChEBI" id="CHEBI:78442"/>
        <dbReference type="ChEBI" id="CHEBI:78534"/>
        <dbReference type="ChEBI" id="CHEBI:456215"/>
        <dbReference type="EC" id="6.1.1.3"/>
    </reaction>
</comment>
<comment type="cofactor">
    <cofactor evidence="1">
        <name>Zn(2+)</name>
        <dbReference type="ChEBI" id="CHEBI:29105"/>
    </cofactor>
    <text evidence="1">Binds 1 zinc ion per subunit.</text>
</comment>
<comment type="subunit">
    <text evidence="1">Homodimer.</text>
</comment>
<comment type="subcellular location">
    <subcellularLocation>
        <location evidence="1">Cytoplasm</location>
    </subcellularLocation>
</comment>
<comment type="similarity">
    <text evidence="1">Belongs to the class-II aminoacyl-tRNA synthetase family.</text>
</comment>
<protein>
    <recommendedName>
        <fullName evidence="1">Threonine--tRNA ligase</fullName>
        <ecNumber evidence="1">6.1.1.3</ecNumber>
    </recommendedName>
    <alternativeName>
        <fullName evidence="1">Threonyl-tRNA synthetase</fullName>
        <shortName evidence="1">ThrRS</shortName>
    </alternativeName>
</protein>
<dbReference type="EC" id="6.1.1.3" evidence="1"/>
<dbReference type="EMBL" id="CP001158">
    <property type="protein sequence ID" value="ACL29945.1"/>
    <property type="molecule type" value="Genomic_DNA"/>
</dbReference>
<dbReference type="RefSeq" id="WP_012619440.1">
    <property type="nucleotide sequence ID" value="NC_011834.1"/>
</dbReference>
<dbReference type="SMR" id="B8D730"/>
<dbReference type="KEGG" id="bau:BUAPTUC7_124"/>
<dbReference type="HOGENOM" id="CLU_008554_0_1_6"/>
<dbReference type="GO" id="GO:0005829">
    <property type="term" value="C:cytosol"/>
    <property type="evidence" value="ECO:0007669"/>
    <property type="project" value="TreeGrafter"/>
</dbReference>
<dbReference type="GO" id="GO:0005524">
    <property type="term" value="F:ATP binding"/>
    <property type="evidence" value="ECO:0007669"/>
    <property type="project" value="UniProtKB-UniRule"/>
</dbReference>
<dbReference type="GO" id="GO:0046872">
    <property type="term" value="F:metal ion binding"/>
    <property type="evidence" value="ECO:0007669"/>
    <property type="project" value="UniProtKB-KW"/>
</dbReference>
<dbReference type="GO" id="GO:0004829">
    <property type="term" value="F:threonine-tRNA ligase activity"/>
    <property type="evidence" value="ECO:0007669"/>
    <property type="project" value="UniProtKB-UniRule"/>
</dbReference>
<dbReference type="GO" id="GO:0000049">
    <property type="term" value="F:tRNA binding"/>
    <property type="evidence" value="ECO:0007669"/>
    <property type="project" value="UniProtKB-KW"/>
</dbReference>
<dbReference type="GO" id="GO:0006435">
    <property type="term" value="P:threonyl-tRNA aminoacylation"/>
    <property type="evidence" value="ECO:0007669"/>
    <property type="project" value="UniProtKB-UniRule"/>
</dbReference>
<dbReference type="CDD" id="cd01667">
    <property type="entry name" value="TGS_ThrRS"/>
    <property type="match status" value="1"/>
</dbReference>
<dbReference type="CDD" id="cd00860">
    <property type="entry name" value="ThrRS_anticodon"/>
    <property type="match status" value="1"/>
</dbReference>
<dbReference type="CDD" id="cd00771">
    <property type="entry name" value="ThrRS_core"/>
    <property type="match status" value="1"/>
</dbReference>
<dbReference type="FunFam" id="3.30.930.10:FF:000002">
    <property type="entry name" value="Threonine--tRNA ligase"/>
    <property type="match status" value="1"/>
</dbReference>
<dbReference type="FunFam" id="3.40.50.800:FF:000001">
    <property type="entry name" value="Threonine--tRNA ligase"/>
    <property type="match status" value="1"/>
</dbReference>
<dbReference type="Gene3D" id="3.10.20.30">
    <property type="match status" value="1"/>
</dbReference>
<dbReference type="Gene3D" id="3.30.54.20">
    <property type="match status" value="1"/>
</dbReference>
<dbReference type="Gene3D" id="3.40.50.800">
    <property type="entry name" value="Anticodon-binding domain"/>
    <property type="match status" value="1"/>
</dbReference>
<dbReference type="Gene3D" id="3.30.930.10">
    <property type="entry name" value="Bira Bifunctional Protein, Domain 2"/>
    <property type="match status" value="1"/>
</dbReference>
<dbReference type="Gene3D" id="3.30.980.10">
    <property type="entry name" value="Threonyl-trna Synthetase, Chain A, domain 2"/>
    <property type="match status" value="1"/>
</dbReference>
<dbReference type="HAMAP" id="MF_00184">
    <property type="entry name" value="Thr_tRNA_synth"/>
    <property type="match status" value="1"/>
</dbReference>
<dbReference type="InterPro" id="IPR002314">
    <property type="entry name" value="aa-tRNA-synt_IIb"/>
</dbReference>
<dbReference type="InterPro" id="IPR006195">
    <property type="entry name" value="aa-tRNA-synth_II"/>
</dbReference>
<dbReference type="InterPro" id="IPR045864">
    <property type="entry name" value="aa-tRNA-synth_II/BPL/LPL"/>
</dbReference>
<dbReference type="InterPro" id="IPR004154">
    <property type="entry name" value="Anticodon-bd"/>
</dbReference>
<dbReference type="InterPro" id="IPR036621">
    <property type="entry name" value="Anticodon-bd_dom_sf"/>
</dbReference>
<dbReference type="InterPro" id="IPR012675">
    <property type="entry name" value="Beta-grasp_dom_sf"/>
</dbReference>
<dbReference type="InterPro" id="IPR004095">
    <property type="entry name" value="TGS"/>
</dbReference>
<dbReference type="InterPro" id="IPR002320">
    <property type="entry name" value="Thr-tRNA-ligase_IIa"/>
</dbReference>
<dbReference type="InterPro" id="IPR018163">
    <property type="entry name" value="Thr/Ala-tRNA-synth_IIc_edit"/>
</dbReference>
<dbReference type="InterPro" id="IPR047246">
    <property type="entry name" value="ThrRS_anticodon"/>
</dbReference>
<dbReference type="InterPro" id="IPR033728">
    <property type="entry name" value="ThrRS_core"/>
</dbReference>
<dbReference type="InterPro" id="IPR012947">
    <property type="entry name" value="tRNA_SAD"/>
</dbReference>
<dbReference type="NCBIfam" id="TIGR00418">
    <property type="entry name" value="thrS"/>
    <property type="match status" value="1"/>
</dbReference>
<dbReference type="PANTHER" id="PTHR11451:SF44">
    <property type="entry name" value="THREONINE--TRNA LIGASE, CHLOROPLASTIC_MITOCHONDRIAL 2"/>
    <property type="match status" value="1"/>
</dbReference>
<dbReference type="PANTHER" id="PTHR11451">
    <property type="entry name" value="THREONINE-TRNA LIGASE"/>
    <property type="match status" value="1"/>
</dbReference>
<dbReference type="Pfam" id="PF03129">
    <property type="entry name" value="HGTP_anticodon"/>
    <property type="match status" value="1"/>
</dbReference>
<dbReference type="Pfam" id="PF00587">
    <property type="entry name" value="tRNA-synt_2b"/>
    <property type="match status" value="1"/>
</dbReference>
<dbReference type="Pfam" id="PF07973">
    <property type="entry name" value="tRNA_SAD"/>
    <property type="match status" value="1"/>
</dbReference>
<dbReference type="PRINTS" id="PR01047">
    <property type="entry name" value="TRNASYNTHTHR"/>
</dbReference>
<dbReference type="SMART" id="SM00863">
    <property type="entry name" value="tRNA_SAD"/>
    <property type="match status" value="1"/>
</dbReference>
<dbReference type="SUPFAM" id="SSF52954">
    <property type="entry name" value="Class II aaRS ABD-related"/>
    <property type="match status" value="1"/>
</dbReference>
<dbReference type="SUPFAM" id="SSF55681">
    <property type="entry name" value="Class II aaRS and biotin synthetases"/>
    <property type="match status" value="1"/>
</dbReference>
<dbReference type="SUPFAM" id="SSF55186">
    <property type="entry name" value="ThrRS/AlaRS common domain"/>
    <property type="match status" value="1"/>
</dbReference>
<dbReference type="PROSITE" id="PS50862">
    <property type="entry name" value="AA_TRNA_LIGASE_II"/>
    <property type="match status" value="1"/>
</dbReference>
<dbReference type="PROSITE" id="PS51880">
    <property type="entry name" value="TGS"/>
    <property type="match status" value="1"/>
</dbReference>
<keyword id="KW-0030">Aminoacyl-tRNA synthetase</keyword>
<keyword id="KW-0067">ATP-binding</keyword>
<keyword id="KW-0963">Cytoplasm</keyword>
<keyword id="KW-0436">Ligase</keyword>
<keyword id="KW-0479">Metal-binding</keyword>
<keyword id="KW-0547">Nucleotide-binding</keyword>
<keyword id="KW-0648">Protein biosynthesis</keyword>
<keyword id="KW-0694">RNA-binding</keyword>
<keyword id="KW-0820">tRNA-binding</keyword>
<keyword id="KW-0862">Zinc</keyword>
<evidence type="ECO:0000255" key="1">
    <source>
        <dbReference type="HAMAP-Rule" id="MF_00184"/>
    </source>
</evidence>
<evidence type="ECO:0000255" key="2">
    <source>
        <dbReference type="PROSITE-ProRule" id="PRU01228"/>
    </source>
</evidence>
<proteinExistence type="inferred from homology"/>
<sequence length="642" mass="76103">MPVIRFYDGSQQVYEHSVSLIEIIKNKKPSIMKSLIAISVNNHFSNLNTFIREDAFIEFVDQKNYKALNIIRYSCAQLLSYAIKNIWPLAQIATSNIIEDGFYCDIDFKRSISEKDLILLENQMKTLVKREYNILNKLISYSEAREIFQKCFEKYKVSLIDENIHCNSKVSLYYHENYADIDIGLQVFNIKFCKYFKLQKIGGVYWKKNKNNKMLQRIYGTAWTNKQELDKHLDYLNELEKRDHRKIGKFLQLYHMQEESPGMIFWHNKGWIIFNELQNFVRVKLKEYKYEEVKTPLLIDKLIWKQSGHWDNYKNAIFTTLSEHREYCIKPMNCPGHVQIFNSRLKSYRDLPIRMAEFGSCHRNEPSGSLHGLMRVRNFTQDDAHIFCTREQVRSEINDCIKMIYDLYSTFHFKKILVKLSTRPEKRIGTDSLWNESEKDLSDMLIENHLSFEYQSGEGAFYGPKIEFILQDSLDRNWQCGTIQLDFYLPLRLSSFYINEKNEKKVPVIIHRAILGSIERFIGILIEECSGNLPTWLSPVQVVIISITDISSGYVKELFKKFSDVNIRIECDLRNEKIGFKIREHTLRRIPYILICGEKESSSKKISVRNRQGHNFGMIDVDFFIKKLQKEIITRNFYQMEE</sequence>
<accession>B8D730</accession>
<reference key="1">
    <citation type="journal article" date="2009" name="Science">
        <title>The dynamics and time scale of ongoing genomic erosion in symbiotic bacteria.</title>
        <authorList>
            <person name="Moran N.A."/>
            <person name="McLaughlin H.J."/>
            <person name="Sorek R."/>
        </authorList>
    </citation>
    <scope>NUCLEOTIDE SEQUENCE [LARGE SCALE GENOMIC DNA]</scope>
    <source>
        <strain>Tuc7</strain>
    </source>
</reference>
<gene>
    <name evidence="1" type="primary">thrS</name>
    <name type="ordered locus">BUAPTUC7_124</name>
</gene>
<organism>
    <name type="scientific">Buchnera aphidicola subsp. Acyrthosiphon pisum (strain Tuc7)</name>
    <dbReference type="NCBI Taxonomy" id="561501"/>
    <lineage>
        <taxon>Bacteria</taxon>
        <taxon>Pseudomonadati</taxon>
        <taxon>Pseudomonadota</taxon>
        <taxon>Gammaproteobacteria</taxon>
        <taxon>Enterobacterales</taxon>
        <taxon>Erwiniaceae</taxon>
        <taxon>Buchnera</taxon>
    </lineage>
</organism>
<name>SYT_BUCAT</name>